<proteinExistence type="evidence at transcript level"/>
<accession>Q6GLL2</accession>
<sequence length="337" mass="37883">MDLDVLNMFLVAGGTLLVPILAFVTSFLLWPAALIKIYYWYWRRALGMQVKFSSYGNYKFCYTSRGKPGNKASVLMLHGFSAHKDMWLSVVKFLPKNLHLVCVDMPGHEGTTRSALDDYSICGQVKRIHQFVESIGLNKRTFHLVGTSMGGNVAGVYAAQHPTDISSLTLICPAGLMYPTESKFLKHLKGLEKSGDDQRILLIPSTAGEMEDMLRLCSFVRFKIPQQVLQGLVDVRIPHNEFYRQLFMALVNEKSRHSLQENMNKIVAPTQIIWGKQDQVLDVSGAEVLAGSIRGCQVEILENCGHSVVMERPRKSAKLMTDFLSSLQSTENNKKHE</sequence>
<comment type="function">
    <text evidence="1 3">Lipase that preferentially hydrolysis medium-chain saturated monoacylglycerols including 2-arachidonoylglycerol (By similarity). Through 2-arachidonoylglycerol degradation may regulate endocannabinoid signaling pathways. Also has a lysophosphatidyl lipase activity with a preference for lysophosphatidylglycerol among other lysophospholipids (By similarity). Also able to degrade bis(monoacylglycero)phosphate (BMP) and constitutes the major enzyme for BMP catabolism. BMP, also known as lysobisphosphatidic acid, is enriched in late endosomes and lysosomes and plays a key role in the formation of intraluminal vesicles and in lipid sorting (By similarity).</text>
</comment>
<comment type="catalytic activity">
    <reaction evidence="3">
        <text>Hydrolyzes glycerol monoesters of long-chain fatty acids.</text>
        <dbReference type="EC" id="3.1.1.23"/>
    </reaction>
</comment>
<comment type="catalytic activity">
    <reaction evidence="3">
        <text>1-octanoylglycerol + H2O = octanoate + glycerol + H(+)</text>
        <dbReference type="Rhea" id="RHEA:44328"/>
        <dbReference type="ChEBI" id="CHEBI:15377"/>
        <dbReference type="ChEBI" id="CHEBI:15378"/>
        <dbReference type="ChEBI" id="CHEBI:17754"/>
        <dbReference type="ChEBI" id="CHEBI:25646"/>
        <dbReference type="ChEBI" id="CHEBI:85241"/>
    </reaction>
</comment>
<comment type="catalytic activity">
    <reaction evidence="3">
        <text>1-decanoylglycerol + H2O = decanoate + glycerol + H(+)</text>
        <dbReference type="Rhea" id="RHEA:44320"/>
        <dbReference type="ChEBI" id="CHEBI:15377"/>
        <dbReference type="ChEBI" id="CHEBI:15378"/>
        <dbReference type="ChEBI" id="CHEBI:17754"/>
        <dbReference type="ChEBI" id="CHEBI:27689"/>
        <dbReference type="ChEBI" id="CHEBI:75547"/>
    </reaction>
</comment>
<comment type="catalytic activity">
    <reaction evidence="3">
        <text>1-dodecanoylglycerol + H2O = dodecanoate + glycerol + H(+)</text>
        <dbReference type="Rhea" id="RHEA:44316"/>
        <dbReference type="ChEBI" id="CHEBI:15377"/>
        <dbReference type="ChEBI" id="CHEBI:15378"/>
        <dbReference type="ChEBI" id="CHEBI:17754"/>
        <dbReference type="ChEBI" id="CHEBI:18262"/>
        <dbReference type="ChEBI" id="CHEBI:75539"/>
    </reaction>
</comment>
<comment type="catalytic activity">
    <reaction evidence="3">
        <text>1-tetradecanoylglycerol + H2O = tetradecanoate + glycerol + H(+)</text>
        <dbReference type="Rhea" id="RHEA:44312"/>
        <dbReference type="ChEBI" id="CHEBI:15377"/>
        <dbReference type="ChEBI" id="CHEBI:15378"/>
        <dbReference type="ChEBI" id="CHEBI:17754"/>
        <dbReference type="ChEBI" id="CHEBI:30807"/>
        <dbReference type="ChEBI" id="CHEBI:75562"/>
    </reaction>
</comment>
<comment type="catalytic activity">
    <reaction evidence="3">
        <text>2-hexadecanoylglycerol + H2O = glycerol + hexadecanoate + H(+)</text>
        <dbReference type="Rhea" id="RHEA:39963"/>
        <dbReference type="ChEBI" id="CHEBI:7896"/>
        <dbReference type="ChEBI" id="CHEBI:15377"/>
        <dbReference type="ChEBI" id="CHEBI:15378"/>
        <dbReference type="ChEBI" id="CHEBI:17754"/>
        <dbReference type="ChEBI" id="CHEBI:75455"/>
    </reaction>
</comment>
<comment type="catalytic activity">
    <reaction evidence="3">
        <text>2-(9Z-octadecenoyl)-glycerol + H2O = glycerol + (9Z)-octadecenoate + H(+)</text>
        <dbReference type="Rhea" id="RHEA:38491"/>
        <dbReference type="ChEBI" id="CHEBI:15377"/>
        <dbReference type="ChEBI" id="CHEBI:15378"/>
        <dbReference type="ChEBI" id="CHEBI:17754"/>
        <dbReference type="ChEBI" id="CHEBI:30823"/>
        <dbReference type="ChEBI" id="CHEBI:73990"/>
    </reaction>
</comment>
<comment type="catalytic activity">
    <reaction evidence="3">
        <text>1-(9Z-octadecenoyl)-glycerol + H2O = glycerol + (9Z)-octadecenoate + H(+)</text>
        <dbReference type="Rhea" id="RHEA:38487"/>
        <dbReference type="ChEBI" id="CHEBI:15377"/>
        <dbReference type="ChEBI" id="CHEBI:15378"/>
        <dbReference type="ChEBI" id="CHEBI:17754"/>
        <dbReference type="ChEBI" id="CHEBI:30823"/>
        <dbReference type="ChEBI" id="CHEBI:75342"/>
    </reaction>
</comment>
<comment type="catalytic activity">
    <reaction evidence="3">
        <text>2-(9Z,12Z-octadecadienoyl)-glycerol + H2O = (9Z,12Z)-octadecadienoate + glycerol + H(+)</text>
        <dbReference type="Rhea" id="RHEA:44732"/>
        <dbReference type="ChEBI" id="CHEBI:15377"/>
        <dbReference type="ChEBI" id="CHEBI:15378"/>
        <dbReference type="ChEBI" id="CHEBI:17754"/>
        <dbReference type="ChEBI" id="CHEBI:30245"/>
        <dbReference type="ChEBI" id="CHEBI:75457"/>
    </reaction>
</comment>
<comment type="catalytic activity">
    <reaction evidence="3">
        <text>2-(5Z,8Z,11Z,14Z-eicosatetraenoyl)-glycerol + H2O = glycerol + (5Z,8Z,11Z,14Z)-eicosatetraenoate + H(+)</text>
        <dbReference type="Rhea" id="RHEA:26132"/>
        <dbReference type="ChEBI" id="CHEBI:15377"/>
        <dbReference type="ChEBI" id="CHEBI:15378"/>
        <dbReference type="ChEBI" id="CHEBI:17754"/>
        <dbReference type="ChEBI" id="CHEBI:32395"/>
        <dbReference type="ChEBI" id="CHEBI:52392"/>
    </reaction>
</comment>
<comment type="catalytic activity">
    <reaction evidence="3">
        <text>1-(5Z,8Z,11Z,14Z-eicosatetraenoyl)-glycerol + H2O = glycerol + (5Z,8Z,11Z,14Z)-eicosatetraenoate + H(+)</text>
        <dbReference type="Rhea" id="RHEA:44728"/>
        <dbReference type="ChEBI" id="CHEBI:15377"/>
        <dbReference type="ChEBI" id="CHEBI:15378"/>
        <dbReference type="ChEBI" id="CHEBI:17754"/>
        <dbReference type="ChEBI" id="CHEBI:32395"/>
        <dbReference type="ChEBI" id="CHEBI:75612"/>
    </reaction>
</comment>
<comment type="catalytic activity">
    <reaction evidence="3">
        <text>1-(9Z,12Z-octadecadienoyl)-glycerol + H2O = (9Z,12Z)-octadecadienoate + glycerol + H(+)</text>
        <dbReference type="Rhea" id="RHEA:48428"/>
        <dbReference type="ChEBI" id="CHEBI:15377"/>
        <dbReference type="ChEBI" id="CHEBI:15378"/>
        <dbReference type="ChEBI" id="CHEBI:17754"/>
        <dbReference type="ChEBI" id="CHEBI:30245"/>
        <dbReference type="ChEBI" id="CHEBI:75568"/>
    </reaction>
</comment>
<comment type="catalytic activity">
    <reaction evidence="3">
        <text>3-(9Z-octadecenoyl)-sn-glycero-1-phospho-(3'-(9Z-octadecenoyl)-1'-sn-glycerol) + H2O = 3-(9Z-octadecenoyl)-sn-glycero-1-phospho-(1'-sn-glycerol) + (9Z)-octadecenoate + H(+)</text>
        <dbReference type="Rhea" id="RHEA:55712"/>
        <dbReference type="ChEBI" id="CHEBI:15377"/>
        <dbReference type="ChEBI" id="CHEBI:15378"/>
        <dbReference type="ChEBI" id="CHEBI:30823"/>
        <dbReference type="ChEBI" id="CHEBI:139150"/>
        <dbReference type="ChEBI" id="CHEBI:139152"/>
    </reaction>
</comment>
<comment type="catalytic activity">
    <reaction evidence="1">
        <text>(S,S)-2-(9Z-octadecenoyl)-sn-glycero-1-phospho-(2'-(9Z-octadecenoyl)-1'-sn-glycerol) + H2O = (S,S)-2-(9Z-octadecenoyl)-sn-glycero-1-phospho-(1'-sn-glycerol) + (9Z)-octadecenoate + H(+)</text>
        <dbReference type="Rhea" id="RHEA:55716"/>
        <dbReference type="ChEBI" id="CHEBI:15377"/>
        <dbReference type="ChEBI" id="CHEBI:15378"/>
        <dbReference type="ChEBI" id="CHEBI:30823"/>
        <dbReference type="ChEBI" id="CHEBI:139156"/>
        <dbReference type="ChEBI" id="CHEBI:139157"/>
    </reaction>
</comment>
<comment type="catalytic activity">
    <reaction evidence="1">
        <text>(R,R)-2-(9Z-octadecenoyl)-sn-glycero-3-phospho-(2'-(9Z-octadecenoyl)-3'-sn-glycerol) + H2O = (R,R)-2-(9Z-octadecenoyl)-sn-glycero-3-phospho-(3'-sn-glycerol) + (9Z)-octadecenoate + H(+)</text>
        <dbReference type="Rhea" id="RHEA:55804"/>
        <dbReference type="ChEBI" id="CHEBI:15377"/>
        <dbReference type="ChEBI" id="CHEBI:15378"/>
        <dbReference type="ChEBI" id="CHEBI:30823"/>
        <dbReference type="ChEBI" id="CHEBI:139228"/>
        <dbReference type="ChEBI" id="CHEBI:139230"/>
    </reaction>
</comment>
<comment type="subcellular location">
    <subcellularLocation>
        <location evidence="1">Late endosome membrane</location>
        <topology evidence="4">Single-pass type II membrane protein</topology>
    </subcellularLocation>
    <subcellularLocation>
        <location evidence="1">Lysosome membrane</location>
        <topology evidence="4">Single-pass type II membrane protein</topology>
    </subcellularLocation>
    <subcellularLocation>
        <location evidence="1">Mitochondrion membrane</location>
        <topology evidence="4">Single-pass type II membrane protein</topology>
    </subcellularLocation>
</comment>
<comment type="similarity">
    <text evidence="5">Belongs to the AB hydrolase superfamily.</text>
</comment>
<dbReference type="EC" id="3.1.1.23" evidence="3"/>
<dbReference type="EMBL" id="BC074464">
    <property type="protein sequence ID" value="AAH74464.1"/>
    <property type="molecule type" value="mRNA"/>
</dbReference>
<dbReference type="RefSeq" id="NP_001086309.1">
    <property type="nucleotide sequence ID" value="NM_001092840.1"/>
</dbReference>
<dbReference type="SMR" id="Q6GLL2"/>
<dbReference type="ESTHER" id="xenla-q6gll2">
    <property type="family name" value="ABHD6-Lip"/>
</dbReference>
<dbReference type="DNASU" id="444738"/>
<dbReference type="GeneID" id="444738"/>
<dbReference type="KEGG" id="xla:444738"/>
<dbReference type="AGR" id="Xenbase:XB-GENE-6078225"/>
<dbReference type="CTD" id="444738"/>
<dbReference type="Xenbase" id="XB-GENE-6078225">
    <property type="gene designation" value="abhd6.S"/>
</dbReference>
<dbReference type="OrthoDB" id="6431331at2759"/>
<dbReference type="Proteomes" id="UP000186698">
    <property type="component" value="Chromosome 4S"/>
</dbReference>
<dbReference type="Bgee" id="444738">
    <property type="expression patterns" value="Expressed in intestine and 20 other cell types or tissues"/>
</dbReference>
<dbReference type="GO" id="GO:0032281">
    <property type="term" value="C:AMPA glutamate receptor complex"/>
    <property type="evidence" value="ECO:0000318"/>
    <property type="project" value="GO_Central"/>
</dbReference>
<dbReference type="GO" id="GO:0031902">
    <property type="term" value="C:late endosome membrane"/>
    <property type="evidence" value="ECO:0000250"/>
    <property type="project" value="UniProtKB"/>
</dbReference>
<dbReference type="GO" id="GO:0005765">
    <property type="term" value="C:lysosomal membrane"/>
    <property type="evidence" value="ECO:0000250"/>
    <property type="project" value="UniProtKB"/>
</dbReference>
<dbReference type="GO" id="GO:0016020">
    <property type="term" value="C:membrane"/>
    <property type="evidence" value="ECO:0000250"/>
    <property type="project" value="UniProtKB"/>
</dbReference>
<dbReference type="GO" id="GO:0031966">
    <property type="term" value="C:mitochondrial membrane"/>
    <property type="evidence" value="ECO:0007669"/>
    <property type="project" value="UniProtKB-SubCell"/>
</dbReference>
<dbReference type="GO" id="GO:0047372">
    <property type="term" value="F:monoacylglycerol lipase activity"/>
    <property type="evidence" value="ECO:0000250"/>
    <property type="project" value="UniProtKB"/>
</dbReference>
<dbReference type="GO" id="GO:0046464">
    <property type="term" value="P:acylglycerol catabolic process"/>
    <property type="evidence" value="ECO:0000250"/>
    <property type="project" value="UniProtKB"/>
</dbReference>
<dbReference type="GO" id="GO:2001311">
    <property type="term" value="P:lysobisphosphatidic acid metabolic process"/>
    <property type="evidence" value="ECO:0000250"/>
    <property type="project" value="UniProtKB"/>
</dbReference>
<dbReference type="GO" id="GO:0052651">
    <property type="term" value="P:monoacylglycerol catabolic process"/>
    <property type="evidence" value="ECO:0000250"/>
    <property type="project" value="UniProtKB"/>
</dbReference>
<dbReference type="FunFam" id="3.40.50.1820:FF:000082">
    <property type="entry name" value="monoacylglycerol lipase ABHD6"/>
    <property type="match status" value="1"/>
</dbReference>
<dbReference type="Gene3D" id="3.40.50.1820">
    <property type="entry name" value="alpha/beta hydrolase"/>
    <property type="match status" value="1"/>
</dbReference>
<dbReference type="InterPro" id="IPR000073">
    <property type="entry name" value="AB_hydrolase_1"/>
</dbReference>
<dbReference type="InterPro" id="IPR029058">
    <property type="entry name" value="AB_hydrolase_fold"/>
</dbReference>
<dbReference type="InterPro" id="IPR050266">
    <property type="entry name" value="AB_hydrolase_sf"/>
</dbReference>
<dbReference type="PANTHER" id="PTHR43798">
    <property type="entry name" value="MONOACYLGLYCEROL LIPASE"/>
    <property type="match status" value="1"/>
</dbReference>
<dbReference type="PANTHER" id="PTHR43798:SF5">
    <property type="entry name" value="MONOACYLGLYCEROL LIPASE ABHD6"/>
    <property type="match status" value="1"/>
</dbReference>
<dbReference type="Pfam" id="PF00561">
    <property type="entry name" value="Abhydrolase_1"/>
    <property type="match status" value="1"/>
</dbReference>
<dbReference type="PRINTS" id="PR00111">
    <property type="entry name" value="ABHYDROLASE"/>
</dbReference>
<dbReference type="SUPFAM" id="SSF53474">
    <property type="entry name" value="alpha/beta-Hydrolases"/>
    <property type="match status" value="1"/>
</dbReference>
<organism>
    <name type="scientific">Xenopus laevis</name>
    <name type="common">African clawed frog</name>
    <dbReference type="NCBI Taxonomy" id="8355"/>
    <lineage>
        <taxon>Eukaryota</taxon>
        <taxon>Metazoa</taxon>
        <taxon>Chordata</taxon>
        <taxon>Craniata</taxon>
        <taxon>Vertebrata</taxon>
        <taxon>Euteleostomi</taxon>
        <taxon>Amphibia</taxon>
        <taxon>Batrachia</taxon>
        <taxon>Anura</taxon>
        <taxon>Pipoidea</taxon>
        <taxon>Pipidae</taxon>
        <taxon>Xenopodinae</taxon>
        <taxon>Xenopus</taxon>
        <taxon>Xenopus</taxon>
    </lineage>
</organism>
<feature type="chain" id="PRO_0000281578" description="Monoacylglycerol lipase abhd6-A">
    <location>
        <begin position="1"/>
        <end position="337"/>
    </location>
</feature>
<feature type="topological domain" description="Extracellular" evidence="4">
    <location>
        <begin position="1"/>
        <end position="19"/>
    </location>
</feature>
<feature type="transmembrane region" description="Helical; Signal-anchor for type II membrane protein" evidence="4">
    <location>
        <begin position="20"/>
        <end position="42"/>
    </location>
</feature>
<feature type="topological domain" description="Cytoplasmic" evidence="4">
    <location>
        <begin position="43"/>
        <end position="337"/>
    </location>
</feature>
<feature type="domain" description="AB hydrolase-1" evidence="4">
    <location>
        <begin position="73"/>
        <end position="313"/>
    </location>
</feature>
<feature type="active site" description="Nucleophile" evidence="2">
    <location>
        <position position="148"/>
    </location>
</feature>
<feature type="active site" description="Charge relay system" evidence="2">
    <location>
        <position position="278"/>
    </location>
</feature>
<feature type="active site" description="Charge relay system" evidence="2">
    <location>
        <position position="306"/>
    </location>
</feature>
<protein>
    <recommendedName>
        <fullName evidence="5">Monoacylglycerol lipase abhd6-A</fullName>
        <ecNumber evidence="3">3.1.1.23</ecNumber>
    </recommendedName>
    <alternativeName>
        <fullName>Abhydrolase domain-containing protein 6-A</fullName>
    </alternativeName>
</protein>
<name>ABH6A_XENLA</name>
<evidence type="ECO:0000250" key="1">
    <source>
        <dbReference type="UniProtKB" id="Q8R2Y0"/>
    </source>
</evidence>
<evidence type="ECO:0000250" key="2">
    <source>
        <dbReference type="UniProtKB" id="Q99685"/>
    </source>
</evidence>
<evidence type="ECO:0000250" key="3">
    <source>
        <dbReference type="UniProtKB" id="Q9BV23"/>
    </source>
</evidence>
<evidence type="ECO:0000255" key="4"/>
<evidence type="ECO:0000305" key="5"/>
<reference key="1">
    <citation type="submission" date="2004-06" db="EMBL/GenBank/DDBJ databases">
        <authorList>
            <consortium name="NIH - Xenopus Gene Collection (XGC) project"/>
        </authorList>
    </citation>
    <scope>NUCLEOTIDE SEQUENCE [LARGE SCALE MRNA]</scope>
    <source>
        <tissue>Brain</tissue>
    </source>
</reference>
<gene>
    <name type="primary">abhd6-a</name>
</gene>
<keyword id="KW-0967">Endosome</keyword>
<keyword id="KW-0378">Hydrolase</keyword>
<keyword id="KW-0443">Lipid metabolism</keyword>
<keyword id="KW-0458">Lysosome</keyword>
<keyword id="KW-0472">Membrane</keyword>
<keyword id="KW-0496">Mitochondrion</keyword>
<keyword id="KW-1185">Reference proteome</keyword>
<keyword id="KW-0735">Signal-anchor</keyword>
<keyword id="KW-0812">Transmembrane</keyword>
<keyword id="KW-1133">Transmembrane helix</keyword>